<gene>
    <name type="ordered locus">Cbei_1739</name>
</gene>
<protein>
    <recommendedName>
        <fullName evidence="1">UPF0246 protein Cbei_1739</fullName>
    </recommendedName>
</protein>
<dbReference type="EMBL" id="CP000721">
    <property type="protein sequence ID" value="ABR33911.1"/>
    <property type="molecule type" value="Genomic_DNA"/>
</dbReference>
<dbReference type="RefSeq" id="WP_011969063.1">
    <property type="nucleotide sequence ID" value="NC_009617.1"/>
</dbReference>
<dbReference type="SMR" id="A6LU81"/>
<dbReference type="KEGG" id="cbe:Cbei_1739"/>
<dbReference type="eggNOG" id="COG3022">
    <property type="taxonomic scope" value="Bacteria"/>
</dbReference>
<dbReference type="HOGENOM" id="CLU_061989_0_1_9"/>
<dbReference type="Proteomes" id="UP000000565">
    <property type="component" value="Chromosome"/>
</dbReference>
<dbReference type="GO" id="GO:0005829">
    <property type="term" value="C:cytosol"/>
    <property type="evidence" value="ECO:0007669"/>
    <property type="project" value="TreeGrafter"/>
</dbReference>
<dbReference type="GO" id="GO:0033194">
    <property type="term" value="P:response to hydroperoxide"/>
    <property type="evidence" value="ECO:0007669"/>
    <property type="project" value="TreeGrafter"/>
</dbReference>
<dbReference type="HAMAP" id="MF_00652">
    <property type="entry name" value="UPF0246"/>
    <property type="match status" value="1"/>
</dbReference>
<dbReference type="InterPro" id="IPR005583">
    <property type="entry name" value="YaaA"/>
</dbReference>
<dbReference type="NCBIfam" id="NF002542">
    <property type="entry name" value="PRK02101.1-3"/>
    <property type="match status" value="1"/>
</dbReference>
<dbReference type="PANTHER" id="PTHR30283:SF4">
    <property type="entry name" value="PEROXIDE STRESS RESISTANCE PROTEIN YAAA"/>
    <property type="match status" value="1"/>
</dbReference>
<dbReference type="PANTHER" id="PTHR30283">
    <property type="entry name" value="PEROXIDE STRESS RESPONSE PROTEIN YAAA"/>
    <property type="match status" value="1"/>
</dbReference>
<dbReference type="Pfam" id="PF03883">
    <property type="entry name" value="H2O2_YaaD"/>
    <property type="match status" value="1"/>
</dbReference>
<proteinExistence type="inferred from homology"/>
<feature type="chain" id="PRO_1000082763" description="UPF0246 protein Cbei_1739">
    <location>
        <begin position="1"/>
        <end position="260"/>
    </location>
</feature>
<evidence type="ECO:0000255" key="1">
    <source>
        <dbReference type="HAMAP-Rule" id="MF_00652"/>
    </source>
</evidence>
<reference key="1">
    <citation type="submission" date="2007-06" db="EMBL/GenBank/DDBJ databases">
        <title>Complete sequence of Clostridium beijerinckii NCIMB 8052.</title>
        <authorList>
            <consortium name="US DOE Joint Genome Institute"/>
            <person name="Copeland A."/>
            <person name="Lucas S."/>
            <person name="Lapidus A."/>
            <person name="Barry K."/>
            <person name="Detter J.C."/>
            <person name="Glavina del Rio T."/>
            <person name="Hammon N."/>
            <person name="Israni S."/>
            <person name="Dalin E."/>
            <person name="Tice H."/>
            <person name="Pitluck S."/>
            <person name="Sims D."/>
            <person name="Brettin T."/>
            <person name="Bruce D."/>
            <person name="Tapia R."/>
            <person name="Brainard J."/>
            <person name="Schmutz J."/>
            <person name="Larimer F."/>
            <person name="Land M."/>
            <person name="Hauser L."/>
            <person name="Kyrpides N."/>
            <person name="Mikhailova N."/>
            <person name="Bennet G."/>
            <person name="Cann I."/>
            <person name="Chen J.-S."/>
            <person name="Contreras A.L."/>
            <person name="Jones D."/>
            <person name="Kashket E."/>
            <person name="Mitchell W."/>
            <person name="Stoddard S."/>
            <person name="Schwarz W."/>
            <person name="Qureshi N."/>
            <person name="Young M."/>
            <person name="Shi Z."/>
            <person name="Ezeji T."/>
            <person name="White B."/>
            <person name="Blaschek H."/>
            <person name="Richardson P."/>
        </authorList>
    </citation>
    <scope>NUCLEOTIDE SEQUENCE [LARGE SCALE GENOMIC DNA]</scope>
    <source>
        <strain>ATCC 51743 / NCIMB 8052</strain>
    </source>
</reference>
<sequence>MMIIISPAKTLDFSKFNETLPMTKPYFLNEARELVEELKKYDNFSLEKLMKISPKLAKLNTQRFQNWSESLESARQCLVAFKGEVFKGIDVGSYTMEDYFYANDNLRILSGLYGVLKPFDGINLYRLEMATRLGIGGFKNLYDYWGNKLIDNIMKDIERRENKAIVNLASYEYFKAIEDIKTIGDIRVITPIFKEYRDGEYKIITIMAKRARGLMTSFIIRNKIEDLEELKEFNHDGYEFNEELSNEADLVFTRDIHNRN</sequence>
<organism>
    <name type="scientific">Clostridium beijerinckii (strain ATCC 51743 / NCIMB 8052)</name>
    <name type="common">Clostridium acetobutylicum</name>
    <dbReference type="NCBI Taxonomy" id="290402"/>
    <lineage>
        <taxon>Bacteria</taxon>
        <taxon>Bacillati</taxon>
        <taxon>Bacillota</taxon>
        <taxon>Clostridia</taxon>
        <taxon>Eubacteriales</taxon>
        <taxon>Clostridiaceae</taxon>
        <taxon>Clostridium</taxon>
    </lineage>
</organism>
<accession>A6LU81</accession>
<name>Y1739_CLOB8</name>
<comment type="similarity">
    <text evidence="1">Belongs to the UPF0246 family.</text>
</comment>